<reference key="1">
    <citation type="journal article" date="2003" name="Mol. Microbiol.">
        <title>Genome-based analysis of virulence genes in a non-biofilm-forming Staphylococcus epidermidis strain (ATCC 12228).</title>
        <authorList>
            <person name="Zhang Y.-Q."/>
            <person name="Ren S.-X."/>
            <person name="Li H.-L."/>
            <person name="Wang Y.-X."/>
            <person name="Fu G."/>
            <person name="Yang J."/>
            <person name="Qin Z.-Q."/>
            <person name="Miao Y.-G."/>
            <person name="Wang W.-Y."/>
            <person name="Chen R.-S."/>
            <person name="Shen Y."/>
            <person name="Chen Z."/>
            <person name="Yuan Z.-H."/>
            <person name="Zhao G.-P."/>
            <person name="Qu D."/>
            <person name="Danchin A."/>
            <person name="Wen Y.-M."/>
        </authorList>
    </citation>
    <scope>NUCLEOTIDE SEQUENCE [LARGE SCALE GENOMIC DNA]</scope>
    <source>
        <strain>ATCC 12228 / FDA PCI 1200</strain>
    </source>
</reference>
<comment type="similarity">
    <text evidence="1">Belongs to the UPF0637 family.</text>
</comment>
<proteinExistence type="inferred from homology"/>
<evidence type="ECO:0000255" key="1">
    <source>
        <dbReference type="HAMAP-Rule" id="MF_01851"/>
    </source>
</evidence>
<dbReference type="EMBL" id="AE015929">
    <property type="protein sequence ID" value="AAO04401.1"/>
    <property type="molecule type" value="Genomic_DNA"/>
</dbReference>
<dbReference type="RefSeq" id="NP_764359.1">
    <property type="nucleotide sequence ID" value="NC_004461.1"/>
</dbReference>
<dbReference type="RefSeq" id="WP_001831689.1">
    <property type="nucleotide sequence ID" value="NZ_WBME01000031.1"/>
</dbReference>
<dbReference type="SMR" id="Q8CT08"/>
<dbReference type="KEGG" id="sep:SE_0804"/>
<dbReference type="PATRIC" id="fig|176280.10.peg.777"/>
<dbReference type="eggNOG" id="COG4493">
    <property type="taxonomic scope" value="Bacteria"/>
</dbReference>
<dbReference type="HOGENOM" id="CLU_096059_0_0_9"/>
<dbReference type="OrthoDB" id="9812818at2"/>
<dbReference type="Proteomes" id="UP000001411">
    <property type="component" value="Chromosome"/>
</dbReference>
<dbReference type="Gene3D" id="3.30.930.20">
    <property type="entry name" value="Protein of unknown function DUF1054"/>
    <property type="match status" value="1"/>
</dbReference>
<dbReference type="HAMAP" id="MF_01851">
    <property type="entry name" value="UPF0637"/>
    <property type="match status" value="1"/>
</dbReference>
<dbReference type="InterPro" id="IPR009403">
    <property type="entry name" value="UPF0637"/>
</dbReference>
<dbReference type="InterPro" id="IPR053707">
    <property type="entry name" value="UPF0637_domain_sf"/>
</dbReference>
<dbReference type="Pfam" id="PF06335">
    <property type="entry name" value="DUF1054"/>
    <property type="match status" value="1"/>
</dbReference>
<dbReference type="PIRSF" id="PIRSF021332">
    <property type="entry name" value="DUF1054"/>
    <property type="match status" value="1"/>
</dbReference>
<dbReference type="SUPFAM" id="SSF142913">
    <property type="entry name" value="YktB/PF0168-like"/>
    <property type="match status" value="1"/>
</dbReference>
<name>Y804_STAES</name>
<gene>
    <name type="ordered locus">SE_0804</name>
</gene>
<protein>
    <recommendedName>
        <fullName evidence="1">UPF0637 protein SE_0804</fullName>
    </recommendedName>
</protein>
<organism>
    <name type="scientific">Staphylococcus epidermidis (strain ATCC 12228 / FDA PCI 1200)</name>
    <dbReference type="NCBI Taxonomy" id="176280"/>
    <lineage>
        <taxon>Bacteria</taxon>
        <taxon>Bacillati</taxon>
        <taxon>Bacillota</taxon>
        <taxon>Bacilli</taxon>
        <taxon>Bacillales</taxon>
        <taxon>Staphylococcaceae</taxon>
        <taxon>Staphylococcus</taxon>
    </lineage>
</organism>
<sequence length="203" mass="24103">MTQYTFSPKDFKAFEVEGLDQRMEALNDYVRPQLHQLGSYFEEYFTTQTGETFYAHVAKHARRSVNPPIDTWVAFAPNKRGYKMLPHFQIGLFRNQLFIMFGIMHEGRNKEEKVKIFDKHFDKLTSLPSDYSVSLDHMKTEKHYIKDMSNEELHAAIDRVKNVKKGEFFVARTLSPTDKRLKSDKSFLKFVEETFDEFLKFYQ</sequence>
<accession>Q8CT08</accession>
<feature type="chain" id="PRO_0000348333" description="UPF0637 protein SE_0804">
    <location>
        <begin position="1"/>
        <end position="203"/>
    </location>
</feature>